<accession>P56712</accession>
<accession>Q9U658</accession>
<comment type="function">
    <text>Omega-conotoxins act at presynaptic membranes, they bind and block voltage-gated calcium channels (Cav). Acts on high voltage-activated (HVA) calcium currents in molluscan neurons.</text>
</comment>
<comment type="subcellular location">
    <subcellularLocation>
        <location>Secreted</location>
    </subcellularLocation>
</comment>
<comment type="tissue specificity">
    <text>Expressed by the venom duct.</text>
</comment>
<comment type="domain">
    <text evidence="1">The presence of a 'disulfide through disulfide knot' structurally defines this protein as a knottin.</text>
</comment>
<comment type="domain">
    <text>The cysteine framework is VI/VII (C-C-CC-C-C).</text>
</comment>
<comment type="mass spectrometry" mass="3267.7" error="0.3" method="Electrospray" evidence="3"/>
<comment type="similarity">
    <text evidence="4">Belongs to the conotoxin O1 superfamily.</text>
</comment>
<organism>
    <name type="scientific">Conus pennaceus</name>
    <name type="common">Feathered cone</name>
    <name type="synonym">Conus episcopus</name>
    <dbReference type="NCBI Taxonomy" id="37335"/>
    <lineage>
        <taxon>Eukaryota</taxon>
        <taxon>Metazoa</taxon>
        <taxon>Spiralia</taxon>
        <taxon>Lophotrochozoa</taxon>
        <taxon>Mollusca</taxon>
        <taxon>Gastropoda</taxon>
        <taxon>Caenogastropoda</taxon>
        <taxon>Neogastropoda</taxon>
        <taxon>Conoidea</taxon>
        <taxon>Conidae</taxon>
        <taxon>Conus</taxon>
        <taxon>Darioconus</taxon>
    </lineage>
</organism>
<evidence type="ECO:0000250" key="1"/>
<evidence type="ECO:0000255" key="2"/>
<evidence type="ECO:0000269" key="3">
    <source>
    </source>
</evidence>
<evidence type="ECO:0000305" key="4"/>
<name>O16A_CONPE</name>
<keyword id="KW-0027">Amidation</keyword>
<keyword id="KW-0108">Calcium channel impairing toxin</keyword>
<keyword id="KW-0903">Direct protein sequencing</keyword>
<keyword id="KW-1015">Disulfide bond</keyword>
<keyword id="KW-0872">Ion channel impairing toxin</keyword>
<keyword id="KW-0960">Knottin</keyword>
<keyword id="KW-0528">Neurotoxin</keyword>
<keyword id="KW-0638">Presynaptic neurotoxin</keyword>
<keyword id="KW-0964">Secreted</keyword>
<keyword id="KW-0732">Signal</keyword>
<keyword id="KW-0800">Toxin</keyword>
<keyword id="KW-1218">Voltage-gated calcium channel impairing toxin</keyword>
<feature type="signal peptide" evidence="2">
    <location>
        <begin position="1"/>
        <end position="22"/>
    </location>
</feature>
<feature type="propeptide" id="PRO_0000392704" evidence="3">
    <location>
        <begin position="23"/>
        <end position="45"/>
    </location>
</feature>
<feature type="peptide" id="PRO_0000044876" description="Omega-conotoxin PnVIA">
    <location>
        <begin position="46"/>
        <end position="76"/>
    </location>
</feature>
<feature type="modified residue" description="Glutamine amide" evidence="3">
    <location>
        <position position="76"/>
    </location>
</feature>
<feature type="disulfide bond" evidence="1">
    <location>
        <begin position="47"/>
        <end position="65"/>
    </location>
</feature>
<feature type="disulfide bond" evidence="1">
    <location>
        <begin position="54"/>
        <end position="69"/>
    </location>
</feature>
<feature type="disulfide bond" evidence="1">
    <location>
        <begin position="64"/>
        <end position="73"/>
    </location>
</feature>
<sequence length="78" mass="8615">MKLTCMMIIAVLFLTAWTFVMADDPRDEPEARDEMNPAASKLNERGCLEVDYFCGIPFANNGLCCSGNCVFVCTPQGK</sequence>
<proteinExistence type="evidence at protein level"/>
<reference key="1">
    <citation type="journal article" date="2001" name="Mol. Biol. Evol.">
        <title>Mechanisms for evolving hypervariability: the case of conopeptides.</title>
        <authorList>
            <person name="Conticello S.G."/>
            <person name="Gilad Y."/>
            <person name="Avidan N."/>
            <person name="Ben-Asher E."/>
            <person name="Levy Z."/>
            <person name="Fainzilber M."/>
        </authorList>
    </citation>
    <scope>NUCLEOTIDE SEQUENCE [MRNA]</scope>
</reference>
<reference key="2">
    <citation type="journal article" date="1996" name="J. Neurochem.">
        <title>Novel omega-conotoxins block dihydropyridine-insensitive high voltage-activated calcium channels in molluscan neurons.</title>
        <authorList>
            <person name="Kits K.S."/>
            <person name="Lodder J.C."/>
            <person name="van der Schors R.C."/>
            <person name="Li K.W."/>
            <person name="Geraerts W.P.M."/>
            <person name="Fainzilber M."/>
        </authorList>
    </citation>
    <scope>PROTEIN SEQUENCE OF 46-76</scope>
    <scope>AMIDATION AT GLN-76</scope>
    <scope>MASS SPECTROMETRY</scope>
    <source>
        <tissue>Venom</tissue>
    </source>
</reference>
<dbReference type="EMBL" id="AF193258">
    <property type="protein sequence ID" value="AAF07969.1"/>
    <property type="molecule type" value="mRNA"/>
</dbReference>
<dbReference type="SMR" id="P56712"/>
<dbReference type="ConoServer" id="1742">
    <property type="toxin name" value="PnVIA"/>
</dbReference>
<dbReference type="ConoServer" id="1091">
    <property type="toxin name" value="PnVIA precursor"/>
</dbReference>
<dbReference type="GO" id="GO:0005576">
    <property type="term" value="C:extracellular region"/>
    <property type="evidence" value="ECO:0007669"/>
    <property type="project" value="UniProtKB-SubCell"/>
</dbReference>
<dbReference type="GO" id="GO:0044231">
    <property type="term" value="C:host cell presynaptic membrane"/>
    <property type="evidence" value="ECO:0007669"/>
    <property type="project" value="UniProtKB-KW"/>
</dbReference>
<dbReference type="GO" id="GO:0005246">
    <property type="term" value="F:calcium channel regulator activity"/>
    <property type="evidence" value="ECO:0007669"/>
    <property type="project" value="UniProtKB-KW"/>
</dbReference>
<dbReference type="GO" id="GO:0008200">
    <property type="term" value="F:ion channel inhibitor activity"/>
    <property type="evidence" value="ECO:0007669"/>
    <property type="project" value="InterPro"/>
</dbReference>
<dbReference type="GO" id="GO:0090729">
    <property type="term" value="F:toxin activity"/>
    <property type="evidence" value="ECO:0007669"/>
    <property type="project" value="UniProtKB-KW"/>
</dbReference>
<dbReference type="InterPro" id="IPR004214">
    <property type="entry name" value="Conotoxin"/>
</dbReference>
<dbReference type="InterPro" id="IPR012321">
    <property type="entry name" value="Conotoxin_omega-typ_CS"/>
</dbReference>
<dbReference type="Pfam" id="PF02950">
    <property type="entry name" value="Conotoxin"/>
    <property type="match status" value="1"/>
</dbReference>
<dbReference type="SUPFAM" id="SSF57059">
    <property type="entry name" value="omega toxin-like"/>
    <property type="match status" value="1"/>
</dbReference>
<dbReference type="PROSITE" id="PS60004">
    <property type="entry name" value="OMEGA_CONOTOXIN"/>
    <property type="match status" value="1"/>
</dbReference>
<protein>
    <recommendedName>
        <fullName>Omega-conotoxin PnVIA</fullName>
    </recommendedName>
</protein>